<sequence length="785" mass="89779">MASVQDIGLSAAINLLSAFAFLFAFAMLRLQPVNDRVYFPKWYLKGIRGSPTRSRGIMTRFVNLDWTTYVKFLNWMPAALQMPEPELIEHAGLDSAVYIRIYLLGLKMFVPITLLAFGVLVPVNWTGETLENIDDLTFSNVDKLSISNVPPGSPRFWAHITMTYVITFWTCYILYMEYKAVANMRLRHLAAESRRPDQLTVLVRNVPPDPDESVNEHVEHFFCVNHPDHYLCHQVVYNANDLAKLVAQRKAMQNWLTYYENKFERKPSSRPTTKTGYGGFWGTTVDAIDFYTSKMDILAEQEAVEREKIMNDPKAIMPAAFVSFRSRWGTAVCAQTQQCHNPTIWLTEWAPEPRDVFWDNLAIPYVELSIRRLLTTVALFFLIFCFMIPIAFVQSLANLEGIQKVLPFLKPVIEMKTVKSVIQGFLPGIALKIFLIILPTILMTMSQIEGYTSLSYLDRRSAEKYFWFIIVNVFLGSIITGTAFQQLKSFLEQPPTEIPKTVGVSIPMKATFFITYIMVDGWAGIAAEILRVVPLVIFHLKNTFLVKTEQDRQQAMDPGHLDFATSEPRIQFYFLLGLVYAAVAPILLPFIIVFFAFAYVVFRHQVINVYDQKYESGARYWPDVHRRLIICLIISQLLMMGLLSTKKFAKVTALLLPQPILTFWFYRYCAGRFESAFSKFPLQEAMVKDTLEKATEPNLNLKEYLKDAYVHPVFKGNDFDRPRVVDEEESNPLVRTKRTSQGTTRYNSEASSSATTTPVANNDSPRCWGTKIGSFGCVIVVSYSC</sequence>
<protein>
    <recommendedName>
        <fullName evidence="4">Hyperosmolality-gated Ca2+ permeable channel 1.7</fullName>
        <shortName evidence="4">AtOSCA1.7</shortName>
    </recommendedName>
</protein>
<gene>
    <name evidence="4" type="primary">OSCA1.7</name>
    <name type="ordered locus">At4g02900</name>
    <name type="ORF">T4I9.22</name>
    <name type="ORF">T5J8.22</name>
</gene>
<comment type="function">
    <text evidence="3">Calcium-permeable channel involved in plant stomatal immunity.</text>
</comment>
<comment type="catalytic activity">
    <reaction evidence="3">
        <text>Ca(2+)(in) = Ca(2+)(out)</text>
        <dbReference type="Rhea" id="RHEA:29671"/>
        <dbReference type="ChEBI" id="CHEBI:29108"/>
    </reaction>
</comment>
<comment type="subcellular location">
    <subcellularLocation>
        <location evidence="5">Membrane</location>
        <topology evidence="5">Multi-pass membrane protein</topology>
    </subcellularLocation>
</comment>
<comment type="PTM">
    <text evidence="3">Phosphorylated and activated by BIK1.</text>
</comment>
<comment type="similarity">
    <text evidence="5">Belongs to the CSC1 (TC 1.A.17) family.</text>
</comment>
<comment type="sequence caution" evidence="5">
    <conflict type="erroneous gene model prediction">
        <sequence resource="EMBL-CDS" id="AAC79116"/>
    </conflict>
</comment>
<evidence type="ECO:0000255" key="1"/>
<evidence type="ECO:0000256" key="2">
    <source>
        <dbReference type="SAM" id="MobiDB-lite"/>
    </source>
</evidence>
<evidence type="ECO:0000269" key="3">
    <source>
    </source>
</evidence>
<evidence type="ECO:0000303" key="4">
    <source>
    </source>
</evidence>
<evidence type="ECO:0000305" key="5"/>
<evidence type="ECO:0000305" key="6">
    <source>
    </source>
</evidence>
<name>OSC17_ARATH</name>
<dbReference type="EMBL" id="AC004044">
    <property type="protein sequence ID" value="AAD15333.1"/>
    <property type="molecule type" value="Genomic_DNA"/>
</dbReference>
<dbReference type="EMBL" id="AF069442">
    <property type="protein sequence ID" value="AAC79116.1"/>
    <property type="status" value="ALT_SEQ"/>
    <property type="molecule type" value="Genomic_DNA"/>
</dbReference>
<dbReference type="EMBL" id="AL161495">
    <property type="protein sequence ID" value="CAB77775.1"/>
    <property type="molecule type" value="Genomic_DNA"/>
</dbReference>
<dbReference type="EMBL" id="CP002687">
    <property type="protein sequence ID" value="AEE82248.1"/>
    <property type="molecule type" value="Genomic_DNA"/>
</dbReference>
<dbReference type="PIR" id="H85036">
    <property type="entry name" value="H85036"/>
</dbReference>
<dbReference type="PIR" id="T01403">
    <property type="entry name" value="T01403"/>
</dbReference>
<dbReference type="RefSeq" id="NP_192199.1">
    <property type="nucleotide sequence ID" value="NM_116524.2"/>
</dbReference>
<dbReference type="SMR" id="Q9SY14"/>
<dbReference type="FunCoup" id="Q9SY14">
    <property type="interactions" value="724"/>
</dbReference>
<dbReference type="STRING" id="3702.Q9SY14"/>
<dbReference type="TCDB" id="1.A.17.5.9">
    <property type="family name" value="the calcium-dependent chloride channel (ca-clc) family"/>
</dbReference>
<dbReference type="iPTMnet" id="Q9SY14"/>
<dbReference type="PaxDb" id="3702-AT4G02900.1"/>
<dbReference type="ProteomicsDB" id="220495"/>
<dbReference type="EnsemblPlants" id="AT4G02900.1">
    <property type="protein sequence ID" value="AT4G02900.1"/>
    <property type="gene ID" value="AT4G02900"/>
</dbReference>
<dbReference type="GeneID" id="828143"/>
<dbReference type="Gramene" id="AT4G02900.1">
    <property type="protein sequence ID" value="AT4G02900.1"/>
    <property type="gene ID" value="AT4G02900"/>
</dbReference>
<dbReference type="KEGG" id="ath:AT4G02900"/>
<dbReference type="Araport" id="AT4G02900"/>
<dbReference type="TAIR" id="AT4G02900"/>
<dbReference type="eggNOG" id="KOG1134">
    <property type="taxonomic scope" value="Eukaryota"/>
</dbReference>
<dbReference type="HOGENOM" id="CLU_002458_7_1_1"/>
<dbReference type="InParanoid" id="Q9SY14"/>
<dbReference type="OrthoDB" id="1689567at2759"/>
<dbReference type="PhylomeDB" id="Q9SY14"/>
<dbReference type="PRO" id="PR:Q9SY14"/>
<dbReference type="Proteomes" id="UP000006548">
    <property type="component" value="Chromosome 4"/>
</dbReference>
<dbReference type="ExpressionAtlas" id="Q9SY14">
    <property type="expression patterns" value="baseline and differential"/>
</dbReference>
<dbReference type="GO" id="GO:0016020">
    <property type="term" value="C:membrane"/>
    <property type="evidence" value="ECO:0007669"/>
    <property type="project" value="UniProtKB-SubCell"/>
</dbReference>
<dbReference type="GO" id="GO:0005227">
    <property type="term" value="F:calcium-activated cation channel activity"/>
    <property type="evidence" value="ECO:0007669"/>
    <property type="project" value="InterPro"/>
</dbReference>
<dbReference type="InterPro" id="IPR045122">
    <property type="entry name" value="Csc1-like"/>
</dbReference>
<dbReference type="InterPro" id="IPR003864">
    <property type="entry name" value="CSC1/OSCA1-like_7TM"/>
</dbReference>
<dbReference type="InterPro" id="IPR027815">
    <property type="entry name" value="CSC1/OSCA1-like_cyt"/>
</dbReference>
<dbReference type="InterPro" id="IPR032880">
    <property type="entry name" value="Csc1/OSCA1-like_N"/>
</dbReference>
<dbReference type="PANTHER" id="PTHR13018:SF96">
    <property type="entry name" value="OS05G0393800 PROTEIN"/>
    <property type="match status" value="1"/>
</dbReference>
<dbReference type="PANTHER" id="PTHR13018">
    <property type="entry name" value="PROBABLE MEMBRANE PROTEIN DUF221-RELATED"/>
    <property type="match status" value="1"/>
</dbReference>
<dbReference type="Pfam" id="PF14703">
    <property type="entry name" value="PHM7_cyt"/>
    <property type="match status" value="1"/>
</dbReference>
<dbReference type="Pfam" id="PF02714">
    <property type="entry name" value="RSN1_7TM"/>
    <property type="match status" value="1"/>
</dbReference>
<dbReference type="Pfam" id="PF13967">
    <property type="entry name" value="RSN1_TM"/>
    <property type="match status" value="1"/>
</dbReference>
<accession>Q9SY14</accession>
<accession>Q9ZT88</accession>
<feature type="chain" id="PRO_0000429800" description="Hyperosmolality-gated Ca2+ permeable channel 1.7">
    <location>
        <begin position="1"/>
        <end position="785"/>
    </location>
</feature>
<feature type="transmembrane region" description="Helical" evidence="1">
    <location>
        <begin position="7"/>
        <end position="27"/>
    </location>
</feature>
<feature type="transmembrane region" description="Helical" evidence="1">
    <location>
        <begin position="101"/>
        <end position="121"/>
    </location>
</feature>
<feature type="transmembrane region" description="Helical" evidence="1">
    <location>
        <begin position="156"/>
        <end position="176"/>
    </location>
</feature>
<feature type="transmembrane region" description="Helical" evidence="1">
    <location>
        <begin position="373"/>
        <end position="393"/>
    </location>
</feature>
<feature type="transmembrane region" description="Helical" evidence="1">
    <location>
        <begin position="425"/>
        <end position="445"/>
    </location>
</feature>
<feature type="transmembrane region" description="Helical" evidence="1">
    <location>
        <begin position="465"/>
        <end position="485"/>
    </location>
</feature>
<feature type="transmembrane region" description="Helical" evidence="1">
    <location>
        <begin position="510"/>
        <end position="530"/>
    </location>
</feature>
<feature type="transmembrane region" description="Helical" evidence="1">
    <location>
        <begin position="582"/>
        <end position="602"/>
    </location>
</feature>
<feature type="transmembrane region" description="Helical" evidence="1">
    <location>
        <begin position="628"/>
        <end position="648"/>
    </location>
</feature>
<feature type="transmembrane region" description="Helical" evidence="1">
    <location>
        <begin position="651"/>
        <end position="671"/>
    </location>
</feature>
<feature type="region of interest" description="Disordered" evidence="2">
    <location>
        <begin position="725"/>
        <end position="761"/>
    </location>
</feature>
<feature type="compositionally biased region" description="Polar residues" evidence="2">
    <location>
        <begin position="739"/>
        <end position="761"/>
    </location>
</feature>
<feature type="modified residue" description="Phosphoserine" evidence="6">
    <location>
        <position position="54"/>
    </location>
</feature>
<organism>
    <name type="scientific">Arabidopsis thaliana</name>
    <name type="common">Mouse-ear cress</name>
    <dbReference type="NCBI Taxonomy" id="3702"/>
    <lineage>
        <taxon>Eukaryota</taxon>
        <taxon>Viridiplantae</taxon>
        <taxon>Streptophyta</taxon>
        <taxon>Embryophyta</taxon>
        <taxon>Tracheophyta</taxon>
        <taxon>Spermatophyta</taxon>
        <taxon>Magnoliopsida</taxon>
        <taxon>eudicotyledons</taxon>
        <taxon>Gunneridae</taxon>
        <taxon>Pentapetalae</taxon>
        <taxon>rosids</taxon>
        <taxon>malvids</taxon>
        <taxon>Brassicales</taxon>
        <taxon>Brassicaceae</taxon>
        <taxon>Camelineae</taxon>
        <taxon>Arabidopsis</taxon>
    </lineage>
</organism>
<proteinExistence type="evidence at protein level"/>
<reference key="1">
    <citation type="journal article" date="1999" name="Nature">
        <title>Sequence and analysis of chromosome 4 of the plant Arabidopsis thaliana.</title>
        <authorList>
            <person name="Mayer K.F.X."/>
            <person name="Schueller C."/>
            <person name="Wambutt R."/>
            <person name="Murphy G."/>
            <person name="Volckaert G."/>
            <person name="Pohl T."/>
            <person name="Duesterhoeft A."/>
            <person name="Stiekema W."/>
            <person name="Entian K.-D."/>
            <person name="Terryn N."/>
            <person name="Harris B."/>
            <person name="Ansorge W."/>
            <person name="Brandt P."/>
            <person name="Grivell L.A."/>
            <person name="Rieger M."/>
            <person name="Weichselgartner M."/>
            <person name="de Simone V."/>
            <person name="Obermaier B."/>
            <person name="Mache R."/>
            <person name="Mueller M."/>
            <person name="Kreis M."/>
            <person name="Delseny M."/>
            <person name="Puigdomenech P."/>
            <person name="Watson M."/>
            <person name="Schmidtheini T."/>
            <person name="Reichert B."/>
            <person name="Portetelle D."/>
            <person name="Perez-Alonso M."/>
            <person name="Boutry M."/>
            <person name="Bancroft I."/>
            <person name="Vos P."/>
            <person name="Hoheisel J."/>
            <person name="Zimmermann W."/>
            <person name="Wedler H."/>
            <person name="Ridley P."/>
            <person name="Langham S.-A."/>
            <person name="McCullagh B."/>
            <person name="Bilham L."/>
            <person name="Robben J."/>
            <person name="van der Schueren J."/>
            <person name="Grymonprez B."/>
            <person name="Chuang Y.-J."/>
            <person name="Vandenbussche F."/>
            <person name="Braeken M."/>
            <person name="Weltjens I."/>
            <person name="Voet M."/>
            <person name="Bastiaens I."/>
            <person name="Aert R."/>
            <person name="Defoor E."/>
            <person name="Weitzenegger T."/>
            <person name="Bothe G."/>
            <person name="Ramsperger U."/>
            <person name="Hilbert H."/>
            <person name="Braun M."/>
            <person name="Holzer E."/>
            <person name="Brandt A."/>
            <person name="Peters S."/>
            <person name="van Staveren M."/>
            <person name="Dirkse W."/>
            <person name="Mooijman P."/>
            <person name="Klein Lankhorst R."/>
            <person name="Rose M."/>
            <person name="Hauf J."/>
            <person name="Koetter P."/>
            <person name="Berneiser S."/>
            <person name="Hempel S."/>
            <person name="Feldpausch M."/>
            <person name="Lamberth S."/>
            <person name="Van den Daele H."/>
            <person name="De Keyser A."/>
            <person name="Buysshaert C."/>
            <person name="Gielen J."/>
            <person name="Villarroel R."/>
            <person name="De Clercq R."/>
            <person name="van Montagu M."/>
            <person name="Rogers J."/>
            <person name="Cronin A."/>
            <person name="Quail M.A."/>
            <person name="Bray-Allen S."/>
            <person name="Clark L."/>
            <person name="Doggett J."/>
            <person name="Hall S."/>
            <person name="Kay M."/>
            <person name="Lennard N."/>
            <person name="McLay K."/>
            <person name="Mayes R."/>
            <person name="Pettett A."/>
            <person name="Rajandream M.A."/>
            <person name="Lyne M."/>
            <person name="Benes V."/>
            <person name="Rechmann S."/>
            <person name="Borkova D."/>
            <person name="Bloecker H."/>
            <person name="Scharfe M."/>
            <person name="Grimm M."/>
            <person name="Loehnert T.-H."/>
            <person name="Dose S."/>
            <person name="de Haan M."/>
            <person name="Maarse A.C."/>
            <person name="Schaefer M."/>
            <person name="Mueller-Auer S."/>
            <person name="Gabel C."/>
            <person name="Fuchs M."/>
            <person name="Fartmann B."/>
            <person name="Granderath K."/>
            <person name="Dauner D."/>
            <person name="Herzl A."/>
            <person name="Neumann S."/>
            <person name="Argiriou A."/>
            <person name="Vitale D."/>
            <person name="Liguori R."/>
            <person name="Piravandi E."/>
            <person name="Massenet O."/>
            <person name="Quigley F."/>
            <person name="Clabauld G."/>
            <person name="Muendlein A."/>
            <person name="Felber R."/>
            <person name="Schnabl S."/>
            <person name="Hiller R."/>
            <person name="Schmidt W."/>
            <person name="Lecharny A."/>
            <person name="Aubourg S."/>
            <person name="Chefdor F."/>
            <person name="Cooke R."/>
            <person name="Berger C."/>
            <person name="Monfort A."/>
            <person name="Casacuberta E."/>
            <person name="Gibbons T."/>
            <person name="Weber N."/>
            <person name="Vandenbol M."/>
            <person name="Bargues M."/>
            <person name="Terol J."/>
            <person name="Torres A."/>
            <person name="Perez-Perez A."/>
            <person name="Purnelle B."/>
            <person name="Bent E."/>
            <person name="Johnson S."/>
            <person name="Tacon D."/>
            <person name="Jesse T."/>
            <person name="Heijnen L."/>
            <person name="Schwarz S."/>
            <person name="Scholler P."/>
            <person name="Heber S."/>
            <person name="Francs P."/>
            <person name="Bielke C."/>
            <person name="Frishman D."/>
            <person name="Haase D."/>
            <person name="Lemcke K."/>
            <person name="Mewes H.-W."/>
            <person name="Stocker S."/>
            <person name="Zaccaria P."/>
            <person name="Bevan M."/>
            <person name="Wilson R.K."/>
            <person name="de la Bastide M."/>
            <person name="Habermann K."/>
            <person name="Parnell L."/>
            <person name="Dedhia N."/>
            <person name="Gnoj L."/>
            <person name="Schutz K."/>
            <person name="Huang E."/>
            <person name="Spiegel L."/>
            <person name="Sekhon M."/>
            <person name="Murray J."/>
            <person name="Sheet P."/>
            <person name="Cordes M."/>
            <person name="Abu-Threideh J."/>
            <person name="Stoneking T."/>
            <person name="Kalicki J."/>
            <person name="Graves T."/>
            <person name="Harmon G."/>
            <person name="Edwards J."/>
            <person name="Latreille P."/>
            <person name="Courtney L."/>
            <person name="Cloud J."/>
            <person name="Abbott A."/>
            <person name="Scott K."/>
            <person name="Johnson D."/>
            <person name="Minx P."/>
            <person name="Bentley D."/>
            <person name="Fulton B."/>
            <person name="Miller N."/>
            <person name="Greco T."/>
            <person name="Kemp K."/>
            <person name="Kramer J."/>
            <person name="Fulton L."/>
            <person name="Mardis E."/>
            <person name="Dante M."/>
            <person name="Pepin K."/>
            <person name="Hillier L.W."/>
            <person name="Nelson J."/>
            <person name="Spieth J."/>
            <person name="Ryan E."/>
            <person name="Andrews S."/>
            <person name="Geisel C."/>
            <person name="Layman D."/>
            <person name="Du H."/>
            <person name="Ali J."/>
            <person name="Berghoff A."/>
            <person name="Jones K."/>
            <person name="Drone K."/>
            <person name="Cotton M."/>
            <person name="Joshu C."/>
            <person name="Antonoiu B."/>
            <person name="Zidanic M."/>
            <person name="Strong C."/>
            <person name="Sun H."/>
            <person name="Lamar B."/>
            <person name="Yordan C."/>
            <person name="Ma P."/>
            <person name="Zhong J."/>
            <person name="Preston R."/>
            <person name="Vil D."/>
            <person name="Shekher M."/>
            <person name="Matero A."/>
            <person name="Shah R."/>
            <person name="Swaby I.K."/>
            <person name="O'Shaughnessy A."/>
            <person name="Rodriguez M."/>
            <person name="Hoffman J."/>
            <person name="Till S."/>
            <person name="Granat S."/>
            <person name="Shohdy N."/>
            <person name="Hasegawa A."/>
            <person name="Hameed A."/>
            <person name="Lodhi M."/>
            <person name="Johnson A."/>
            <person name="Chen E."/>
            <person name="Marra M.A."/>
            <person name="Martienssen R."/>
            <person name="McCombie W.R."/>
        </authorList>
    </citation>
    <scope>NUCLEOTIDE SEQUENCE [LARGE SCALE GENOMIC DNA]</scope>
    <source>
        <strain>cv. Columbia</strain>
    </source>
</reference>
<reference key="2">
    <citation type="journal article" date="2017" name="Plant J.">
        <title>Araport11: a complete reannotation of the Arabidopsis thaliana reference genome.</title>
        <authorList>
            <person name="Cheng C.Y."/>
            <person name="Krishnakumar V."/>
            <person name="Chan A.P."/>
            <person name="Thibaud-Nissen F."/>
            <person name="Schobel S."/>
            <person name="Town C.D."/>
        </authorList>
    </citation>
    <scope>GENOME REANNOTATION</scope>
    <source>
        <strain>cv. Columbia</strain>
    </source>
</reference>
<reference key="3">
    <citation type="journal article" date="2014" name="Cell Res.">
        <title>DUF221 proteins are a family of osmosensitive calcium-permeable cation channels conserved across eukaryotes.</title>
        <authorList>
            <person name="Hou C."/>
            <person name="Tian W."/>
            <person name="Kleist T."/>
            <person name="He K."/>
            <person name="Garcia V."/>
            <person name="Bai F."/>
            <person name="Hao Y."/>
            <person name="Luan S."/>
            <person name="Li L."/>
        </authorList>
    </citation>
    <scope>GENE FAMILY</scope>
</reference>
<reference key="4">
    <citation type="journal article" date="2020" name="Nature">
        <title>The calcium-permeable channel OSCA1.3 regulates plant stomatal immunity.</title>
        <authorList>
            <person name="Thor K."/>
            <person name="Jiang S."/>
            <person name="Michard E."/>
            <person name="George J."/>
            <person name="Scherzer S."/>
            <person name="Huang S."/>
            <person name="Dindas J."/>
            <person name="Derbyshire P."/>
            <person name="Leitao N."/>
            <person name="DeFalco T.A."/>
            <person name="Koester P."/>
            <person name="Hunter K."/>
            <person name="Kimura S."/>
            <person name="Gronnier J."/>
            <person name="Stransfeld L."/>
            <person name="Kadota Y."/>
            <person name="Buecherl C.A."/>
            <person name="Charpentier M."/>
            <person name="Wrzaczek M."/>
            <person name="MacLean D."/>
            <person name="Oldroyd G.E.D."/>
            <person name="Menke F.L.H."/>
            <person name="Roelfsema M.R.G."/>
            <person name="Hedrich R."/>
            <person name="Feijo J."/>
            <person name="Zipfel C."/>
        </authorList>
    </citation>
    <scope>FUNCTION</scope>
    <scope>CATALYTIC ACTIVITY</scope>
    <scope>PHOSPHORYLATION AT SER-54</scope>
</reference>
<keyword id="KW-0106">Calcium</keyword>
<keyword id="KW-0391">Immunity</keyword>
<keyword id="KW-0399">Innate immunity</keyword>
<keyword id="KW-0407">Ion channel</keyword>
<keyword id="KW-0406">Ion transport</keyword>
<keyword id="KW-0472">Membrane</keyword>
<keyword id="KW-0597">Phosphoprotein</keyword>
<keyword id="KW-0611">Plant defense</keyword>
<keyword id="KW-1185">Reference proteome</keyword>
<keyword id="KW-0812">Transmembrane</keyword>
<keyword id="KW-1133">Transmembrane helix</keyword>
<keyword id="KW-0813">Transport</keyword>